<gene>
    <name type="primary">PSBP</name>
</gene>
<feature type="chain" id="PRO_0000220272" description="Oxygen-evolving enhancer protein 2">
    <location>
        <begin position="1"/>
        <end position="13" status="greater than"/>
    </location>
</feature>
<feature type="non-terminal residue">
    <location>
        <position position="13"/>
    </location>
</feature>
<name>PSBP_PINPS</name>
<proteinExistence type="evidence at protein level"/>
<keyword id="KW-0150">Chloroplast</keyword>
<keyword id="KW-0903">Direct protein sequencing</keyword>
<keyword id="KW-0472">Membrane</keyword>
<keyword id="KW-0602">Photosynthesis</keyword>
<keyword id="KW-0604">Photosystem II</keyword>
<keyword id="KW-0934">Plastid</keyword>
<keyword id="KW-0793">Thylakoid</keyword>
<evidence type="ECO:0000250" key="1"/>
<evidence type="ECO:0000305" key="2"/>
<sequence>AYGEAANVFGAPK</sequence>
<reference key="1">
    <citation type="journal article" date="1999" name="Electrophoresis">
        <title>Separation and characterization of needle and xylem maritime pine proteins.</title>
        <authorList>
            <person name="Costa P."/>
            <person name="Pionneau C."/>
            <person name="Bauw G."/>
            <person name="Dubos C."/>
            <person name="Bahrman N."/>
            <person name="Kremer A."/>
            <person name="Frigerio J.-M."/>
            <person name="Plomion C."/>
        </authorList>
    </citation>
    <scope>PROTEIN SEQUENCE</scope>
    <source>
        <tissue>Needle</tissue>
    </source>
</reference>
<protein>
    <recommendedName>
        <fullName>Oxygen-evolving enhancer protein 2</fullName>
        <shortName>OEE2</shortName>
    </recommendedName>
    <alternativeName>
        <fullName>23 kDa subunit of oxygen evolving system of photosystem II</fullName>
    </alternativeName>
</protein>
<organism>
    <name type="scientific">Pinus pinaster</name>
    <name type="common">Maritime pine</name>
    <dbReference type="NCBI Taxonomy" id="71647"/>
    <lineage>
        <taxon>Eukaryota</taxon>
        <taxon>Viridiplantae</taxon>
        <taxon>Streptophyta</taxon>
        <taxon>Embryophyta</taxon>
        <taxon>Tracheophyta</taxon>
        <taxon>Spermatophyta</taxon>
        <taxon>Pinopsida</taxon>
        <taxon>Pinidae</taxon>
        <taxon>Conifers I</taxon>
        <taxon>Pinales</taxon>
        <taxon>Pinaceae</taxon>
        <taxon>Pinus</taxon>
        <taxon>Pinus subgen. Pinus</taxon>
    </lineage>
</organism>
<accession>P81668</accession>
<dbReference type="GO" id="GO:0009535">
    <property type="term" value="C:chloroplast thylakoid membrane"/>
    <property type="evidence" value="ECO:0007669"/>
    <property type="project" value="UniProtKB-SubCell"/>
</dbReference>
<dbReference type="GO" id="GO:0009523">
    <property type="term" value="C:photosystem II"/>
    <property type="evidence" value="ECO:0007669"/>
    <property type="project" value="UniProtKB-KW"/>
</dbReference>
<dbReference type="GO" id="GO:0015979">
    <property type="term" value="P:photosynthesis"/>
    <property type="evidence" value="ECO:0007669"/>
    <property type="project" value="UniProtKB-KW"/>
</dbReference>
<comment type="function">
    <text>May be involved in the regulation of photosystem II.</text>
</comment>
<comment type="subcellular location">
    <subcellularLocation>
        <location>Plastid</location>
        <location>Chloroplast thylakoid membrane</location>
    </subcellularLocation>
    <text evidence="1">Associated with the photosystem II complex.</text>
</comment>
<comment type="miscellaneous">
    <text>On the 2D-gel the determined pI of this protein (spot N179) is: 5.9, its MW is: 22 kDa.</text>
</comment>
<comment type="similarity">
    <text evidence="2">Belongs to the PsbP family.</text>
</comment>